<dbReference type="EC" id="3.5.2.3" evidence="1"/>
<dbReference type="EMBL" id="CP000247">
    <property type="protein sequence ID" value="ABG69067.1"/>
    <property type="molecule type" value="Genomic_DNA"/>
</dbReference>
<dbReference type="RefSeq" id="WP_000126540.1">
    <property type="nucleotide sequence ID" value="NC_008253.1"/>
</dbReference>
<dbReference type="SMR" id="Q0TJ12"/>
<dbReference type="MEROPS" id="M38.A02"/>
<dbReference type="KEGG" id="ecp:ECP_1054"/>
<dbReference type="HOGENOM" id="CLU_041558_1_0_6"/>
<dbReference type="UniPathway" id="UPA00070">
    <property type="reaction ID" value="UER00117"/>
</dbReference>
<dbReference type="Proteomes" id="UP000009182">
    <property type="component" value="Chromosome"/>
</dbReference>
<dbReference type="GO" id="GO:0005829">
    <property type="term" value="C:cytosol"/>
    <property type="evidence" value="ECO:0007669"/>
    <property type="project" value="TreeGrafter"/>
</dbReference>
<dbReference type="GO" id="GO:0004151">
    <property type="term" value="F:dihydroorotase activity"/>
    <property type="evidence" value="ECO:0007669"/>
    <property type="project" value="UniProtKB-UniRule"/>
</dbReference>
<dbReference type="GO" id="GO:0008270">
    <property type="term" value="F:zinc ion binding"/>
    <property type="evidence" value="ECO:0007669"/>
    <property type="project" value="UniProtKB-UniRule"/>
</dbReference>
<dbReference type="GO" id="GO:0006207">
    <property type="term" value="P:'de novo' pyrimidine nucleobase biosynthetic process"/>
    <property type="evidence" value="ECO:0007669"/>
    <property type="project" value="TreeGrafter"/>
</dbReference>
<dbReference type="GO" id="GO:0044205">
    <property type="term" value="P:'de novo' UMP biosynthetic process"/>
    <property type="evidence" value="ECO:0007669"/>
    <property type="project" value="UniProtKB-UniRule"/>
</dbReference>
<dbReference type="CDD" id="cd01294">
    <property type="entry name" value="DHOase"/>
    <property type="match status" value="1"/>
</dbReference>
<dbReference type="FunFam" id="3.20.20.140:FF:000006">
    <property type="entry name" value="Dihydroorotase"/>
    <property type="match status" value="1"/>
</dbReference>
<dbReference type="Gene3D" id="3.20.20.140">
    <property type="entry name" value="Metal-dependent hydrolases"/>
    <property type="match status" value="1"/>
</dbReference>
<dbReference type="HAMAP" id="MF_00219">
    <property type="entry name" value="PyrC_classII"/>
    <property type="match status" value="1"/>
</dbReference>
<dbReference type="InterPro" id="IPR006680">
    <property type="entry name" value="Amidohydro-rel"/>
</dbReference>
<dbReference type="InterPro" id="IPR004721">
    <property type="entry name" value="DHOdimr"/>
</dbReference>
<dbReference type="InterPro" id="IPR002195">
    <property type="entry name" value="Dihydroorotase_CS"/>
</dbReference>
<dbReference type="InterPro" id="IPR032466">
    <property type="entry name" value="Metal_Hydrolase"/>
</dbReference>
<dbReference type="NCBIfam" id="TIGR00856">
    <property type="entry name" value="pyrC_dimer"/>
    <property type="match status" value="1"/>
</dbReference>
<dbReference type="PANTHER" id="PTHR43137">
    <property type="entry name" value="DIHYDROOROTASE"/>
    <property type="match status" value="1"/>
</dbReference>
<dbReference type="PANTHER" id="PTHR43137:SF1">
    <property type="entry name" value="DIHYDROOROTASE"/>
    <property type="match status" value="1"/>
</dbReference>
<dbReference type="Pfam" id="PF01979">
    <property type="entry name" value="Amidohydro_1"/>
    <property type="match status" value="1"/>
</dbReference>
<dbReference type="PIRSF" id="PIRSF001237">
    <property type="entry name" value="DHOdimr"/>
    <property type="match status" value="1"/>
</dbReference>
<dbReference type="SUPFAM" id="SSF51556">
    <property type="entry name" value="Metallo-dependent hydrolases"/>
    <property type="match status" value="1"/>
</dbReference>
<dbReference type="PROSITE" id="PS00482">
    <property type="entry name" value="DIHYDROOROTASE_1"/>
    <property type="match status" value="1"/>
</dbReference>
<dbReference type="PROSITE" id="PS00483">
    <property type="entry name" value="DIHYDROOROTASE_2"/>
    <property type="match status" value="1"/>
</dbReference>
<proteinExistence type="inferred from homology"/>
<comment type="function">
    <text evidence="1">Catalyzes the reversible cyclization of carbamoyl aspartate to dihydroorotate.</text>
</comment>
<comment type="catalytic activity">
    <reaction evidence="1">
        <text>(S)-dihydroorotate + H2O = N-carbamoyl-L-aspartate + H(+)</text>
        <dbReference type="Rhea" id="RHEA:24296"/>
        <dbReference type="ChEBI" id="CHEBI:15377"/>
        <dbReference type="ChEBI" id="CHEBI:15378"/>
        <dbReference type="ChEBI" id="CHEBI:30864"/>
        <dbReference type="ChEBI" id="CHEBI:32814"/>
        <dbReference type="EC" id="3.5.2.3"/>
    </reaction>
</comment>
<comment type="cofactor">
    <cofactor evidence="1">
        <name>Zn(2+)</name>
        <dbReference type="ChEBI" id="CHEBI:29105"/>
    </cofactor>
    <text evidence="1">Binds 2 Zn(2+) ions per subunit.</text>
</comment>
<comment type="pathway">
    <text evidence="1">Pyrimidine metabolism; UMP biosynthesis via de novo pathway; (S)-dihydroorotate from bicarbonate: step 3/3.</text>
</comment>
<comment type="subunit">
    <text evidence="1">Homodimer.</text>
</comment>
<comment type="similarity">
    <text evidence="1">Belongs to the metallo-dependent hydrolases superfamily. DHOase family. Class II DHOase subfamily.</text>
</comment>
<gene>
    <name evidence="1" type="primary">pyrC</name>
    <name type="ordered locus">ECP_1054</name>
</gene>
<accession>Q0TJ12</accession>
<organism>
    <name type="scientific">Escherichia coli O6:K15:H31 (strain 536 / UPEC)</name>
    <dbReference type="NCBI Taxonomy" id="362663"/>
    <lineage>
        <taxon>Bacteria</taxon>
        <taxon>Pseudomonadati</taxon>
        <taxon>Pseudomonadota</taxon>
        <taxon>Gammaproteobacteria</taxon>
        <taxon>Enterobacterales</taxon>
        <taxon>Enterobacteriaceae</taxon>
        <taxon>Escherichia</taxon>
    </lineage>
</organism>
<feature type="chain" id="PRO_1000024010" description="Dihydroorotase">
    <location>
        <begin position="1"/>
        <end position="348"/>
    </location>
</feature>
<feature type="active site" evidence="1">
    <location>
        <position position="251"/>
    </location>
</feature>
<feature type="binding site" evidence="1">
    <location>
        <position position="17"/>
    </location>
    <ligand>
        <name>Zn(2+)</name>
        <dbReference type="ChEBI" id="CHEBI:29105"/>
        <label>1</label>
    </ligand>
</feature>
<feature type="binding site" evidence="1">
    <location>
        <begin position="19"/>
        <end position="21"/>
    </location>
    <ligand>
        <name>substrate</name>
    </ligand>
</feature>
<feature type="binding site" evidence="1">
    <location>
        <position position="19"/>
    </location>
    <ligand>
        <name>Zn(2+)</name>
        <dbReference type="ChEBI" id="CHEBI:29105"/>
        <label>1</label>
    </ligand>
</feature>
<feature type="binding site" evidence="1">
    <location>
        <position position="45"/>
    </location>
    <ligand>
        <name>substrate</name>
    </ligand>
</feature>
<feature type="binding site" description="via carbamate group" evidence="1">
    <location>
        <position position="103"/>
    </location>
    <ligand>
        <name>Zn(2+)</name>
        <dbReference type="ChEBI" id="CHEBI:29105"/>
        <label>1</label>
    </ligand>
</feature>
<feature type="binding site" description="via carbamate group" evidence="1">
    <location>
        <position position="103"/>
    </location>
    <ligand>
        <name>Zn(2+)</name>
        <dbReference type="ChEBI" id="CHEBI:29105"/>
        <label>2</label>
    </ligand>
</feature>
<feature type="binding site" evidence="1">
    <location>
        <position position="140"/>
    </location>
    <ligand>
        <name>substrate</name>
    </ligand>
</feature>
<feature type="binding site" evidence="1">
    <location>
        <position position="140"/>
    </location>
    <ligand>
        <name>Zn(2+)</name>
        <dbReference type="ChEBI" id="CHEBI:29105"/>
        <label>2</label>
    </ligand>
</feature>
<feature type="binding site" evidence="1">
    <location>
        <position position="178"/>
    </location>
    <ligand>
        <name>Zn(2+)</name>
        <dbReference type="ChEBI" id="CHEBI:29105"/>
        <label>2</label>
    </ligand>
</feature>
<feature type="binding site" evidence="1">
    <location>
        <position position="223"/>
    </location>
    <ligand>
        <name>substrate</name>
    </ligand>
</feature>
<feature type="binding site" evidence="1">
    <location>
        <position position="251"/>
    </location>
    <ligand>
        <name>Zn(2+)</name>
        <dbReference type="ChEBI" id="CHEBI:29105"/>
        <label>1</label>
    </ligand>
</feature>
<feature type="binding site" evidence="1">
    <location>
        <position position="255"/>
    </location>
    <ligand>
        <name>substrate</name>
    </ligand>
</feature>
<feature type="binding site" evidence="1">
    <location>
        <position position="267"/>
    </location>
    <ligand>
        <name>substrate</name>
    </ligand>
</feature>
<feature type="modified residue" description="N6-carboxylysine" evidence="1">
    <location>
        <position position="103"/>
    </location>
</feature>
<evidence type="ECO:0000255" key="1">
    <source>
        <dbReference type="HAMAP-Rule" id="MF_00219"/>
    </source>
</evidence>
<reference key="1">
    <citation type="journal article" date="2006" name="Mol. Microbiol.">
        <title>Role of pathogenicity island-associated integrases in the genome plasticity of uropathogenic Escherichia coli strain 536.</title>
        <authorList>
            <person name="Hochhut B."/>
            <person name="Wilde C."/>
            <person name="Balling G."/>
            <person name="Middendorf B."/>
            <person name="Dobrindt U."/>
            <person name="Brzuszkiewicz E."/>
            <person name="Gottschalk G."/>
            <person name="Carniel E."/>
            <person name="Hacker J."/>
        </authorList>
    </citation>
    <scope>NUCLEOTIDE SEQUENCE [LARGE SCALE GENOMIC DNA]</scope>
    <source>
        <strain>536 / UPEC</strain>
    </source>
</reference>
<protein>
    <recommendedName>
        <fullName evidence="1">Dihydroorotase</fullName>
        <shortName evidence="1">DHOase</shortName>
        <ecNumber evidence="1">3.5.2.3</ecNumber>
    </recommendedName>
</protein>
<keyword id="KW-0378">Hydrolase</keyword>
<keyword id="KW-0479">Metal-binding</keyword>
<keyword id="KW-0665">Pyrimidine biosynthesis</keyword>
<keyword id="KW-0862">Zinc</keyword>
<sequence length="348" mass="38827">MTAPSQVLKIRRPDDWHLHLRDGDMLKTVVPYTSEIYGRAIVMPNLAPPVTTVEAAVAYRQRILDAVPAGHDFTPLMTCYLTDSLDPNELERGFNEGVFTAAKLYPANATTNSSHGVTSVDAIMPILERMEKIGMPLLVHGEVTHADIDIFDREARFIESVMEPLRQRLTALKVVFEHITTKDAADYVRDGNERLAATITPQHLMFNRNHMLVGGVRPHLYCLPILKRNIHQQALRELVASGFNRVFLGTDSAPHARHRKESSCGCAGCFNAPTALGSYATVFEEMNALQHFEAFCSVNGPQFYGLPVNDTFIELVREEQQVAESIALTDDTLVPFLAGETVRWSVKQ</sequence>
<name>PYRC_ECOL5</name>